<comment type="function">
    <text evidence="1">Participates actively in the response to hyperosmotic and heat shock by preventing the aggregation of stress-denatured proteins, in association with DnaK and GrpE. It is the nucleotide exchange factor for DnaK and may function as a thermosensor. Unfolded proteins bind initially to DnaJ; upon interaction with the DnaJ-bound protein, DnaK hydrolyzes its bound ATP, resulting in the formation of a stable complex. GrpE releases ADP from DnaK; ATP binding to DnaK triggers the release of the substrate protein, thus completing the reaction cycle. Several rounds of ATP-dependent interactions between DnaJ, DnaK and GrpE are required for fully efficient folding.</text>
</comment>
<comment type="subunit">
    <text evidence="1">Homodimer.</text>
</comment>
<comment type="subcellular location">
    <subcellularLocation>
        <location evidence="1">Cytoplasm</location>
    </subcellularLocation>
</comment>
<comment type="similarity">
    <text evidence="1">Belongs to the GrpE family.</text>
</comment>
<name>GRPE_PHOPR</name>
<keyword id="KW-0143">Chaperone</keyword>
<keyword id="KW-0963">Cytoplasm</keyword>
<keyword id="KW-1185">Reference proteome</keyword>
<keyword id="KW-0346">Stress response</keyword>
<feature type="chain" id="PRO_0000113834" description="Protein GrpE">
    <location>
        <begin position="1"/>
        <end position="206"/>
    </location>
</feature>
<feature type="region of interest" description="Disordered" evidence="2">
    <location>
        <begin position="1"/>
        <end position="21"/>
    </location>
</feature>
<feature type="compositionally biased region" description="Basic and acidic residues" evidence="2">
    <location>
        <begin position="1"/>
        <end position="18"/>
    </location>
</feature>
<sequence>MNNEDKKLQDEQLQKETVEAAETVSAEEEFVEITAEEMQIARIAELEAALLSSDAKVKEAQDNVLRARAEGENVRRRSEVEIDKARKFALNKFTEELLPVIDNLERAIETADKNDEALKSMIEGVELTLKTMTATVEKFGLKQHNPVGEVFNPEFHQAMSIQESADHEPNTVMLVMQKGYELNGRIIRPAMVMVSKAAAGSVDMQA</sequence>
<organism>
    <name type="scientific">Photobacterium profundum (strain SS9)</name>
    <dbReference type="NCBI Taxonomy" id="298386"/>
    <lineage>
        <taxon>Bacteria</taxon>
        <taxon>Pseudomonadati</taxon>
        <taxon>Pseudomonadota</taxon>
        <taxon>Gammaproteobacteria</taxon>
        <taxon>Vibrionales</taxon>
        <taxon>Vibrionaceae</taxon>
        <taxon>Photobacterium</taxon>
    </lineage>
</organism>
<reference key="1">
    <citation type="journal article" date="2005" name="Science">
        <title>Life at depth: Photobacterium profundum genome sequence and expression analysis.</title>
        <authorList>
            <person name="Vezzi A."/>
            <person name="Campanaro S."/>
            <person name="D'Angelo M."/>
            <person name="Simonato F."/>
            <person name="Vitulo N."/>
            <person name="Lauro F.M."/>
            <person name="Cestaro A."/>
            <person name="Malacrida G."/>
            <person name="Simionati B."/>
            <person name="Cannata N."/>
            <person name="Romualdi C."/>
            <person name="Bartlett D.H."/>
            <person name="Valle G."/>
        </authorList>
    </citation>
    <scope>NUCLEOTIDE SEQUENCE [LARGE SCALE GENOMIC DNA]</scope>
    <source>
        <strain>ATCC BAA-1253 / SS9</strain>
    </source>
</reference>
<gene>
    <name evidence="1" type="primary">grpE</name>
    <name type="ordered locus">PBPRA0696</name>
</gene>
<dbReference type="EMBL" id="CR378665">
    <property type="protein sequence ID" value="CAG19117.1"/>
    <property type="molecule type" value="Genomic_DNA"/>
</dbReference>
<dbReference type="RefSeq" id="WP_011217463.1">
    <property type="nucleotide sequence ID" value="NC_006370.1"/>
</dbReference>
<dbReference type="SMR" id="Q6LUA8"/>
<dbReference type="STRING" id="298386.PBPRA0696"/>
<dbReference type="KEGG" id="ppr:PBPRA0696"/>
<dbReference type="eggNOG" id="COG0576">
    <property type="taxonomic scope" value="Bacteria"/>
</dbReference>
<dbReference type="HOGENOM" id="CLU_057217_6_0_6"/>
<dbReference type="Proteomes" id="UP000000593">
    <property type="component" value="Chromosome 1"/>
</dbReference>
<dbReference type="GO" id="GO:0005829">
    <property type="term" value="C:cytosol"/>
    <property type="evidence" value="ECO:0007669"/>
    <property type="project" value="TreeGrafter"/>
</dbReference>
<dbReference type="GO" id="GO:0000774">
    <property type="term" value="F:adenyl-nucleotide exchange factor activity"/>
    <property type="evidence" value="ECO:0007669"/>
    <property type="project" value="InterPro"/>
</dbReference>
<dbReference type="GO" id="GO:0042803">
    <property type="term" value="F:protein homodimerization activity"/>
    <property type="evidence" value="ECO:0007669"/>
    <property type="project" value="InterPro"/>
</dbReference>
<dbReference type="GO" id="GO:0051087">
    <property type="term" value="F:protein-folding chaperone binding"/>
    <property type="evidence" value="ECO:0007669"/>
    <property type="project" value="InterPro"/>
</dbReference>
<dbReference type="GO" id="GO:0051082">
    <property type="term" value="F:unfolded protein binding"/>
    <property type="evidence" value="ECO:0007669"/>
    <property type="project" value="TreeGrafter"/>
</dbReference>
<dbReference type="GO" id="GO:0006457">
    <property type="term" value="P:protein folding"/>
    <property type="evidence" value="ECO:0007669"/>
    <property type="project" value="InterPro"/>
</dbReference>
<dbReference type="CDD" id="cd00446">
    <property type="entry name" value="GrpE"/>
    <property type="match status" value="1"/>
</dbReference>
<dbReference type="FunFam" id="2.30.22.10:FF:000001">
    <property type="entry name" value="Protein GrpE"/>
    <property type="match status" value="1"/>
</dbReference>
<dbReference type="Gene3D" id="3.90.20.20">
    <property type="match status" value="1"/>
</dbReference>
<dbReference type="Gene3D" id="2.30.22.10">
    <property type="entry name" value="Head domain of nucleotide exchange factor GrpE"/>
    <property type="match status" value="1"/>
</dbReference>
<dbReference type="HAMAP" id="MF_01151">
    <property type="entry name" value="GrpE"/>
    <property type="match status" value="1"/>
</dbReference>
<dbReference type="InterPro" id="IPR000740">
    <property type="entry name" value="GrpE"/>
</dbReference>
<dbReference type="InterPro" id="IPR013805">
    <property type="entry name" value="GrpE_coiled_coil"/>
</dbReference>
<dbReference type="InterPro" id="IPR009012">
    <property type="entry name" value="GrpE_head"/>
</dbReference>
<dbReference type="NCBIfam" id="NF010737">
    <property type="entry name" value="PRK14139.1"/>
    <property type="match status" value="1"/>
</dbReference>
<dbReference type="NCBIfam" id="NF010738">
    <property type="entry name" value="PRK14140.1"/>
    <property type="match status" value="1"/>
</dbReference>
<dbReference type="NCBIfam" id="NF010748">
    <property type="entry name" value="PRK14150.1"/>
    <property type="match status" value="1"/>
</dbReference>
<dbReference type="PANTHER" id="PTHR21237">
    <property type="entry name" value="GRPE PROTEIN"/>
    <property type="match status" value="1"/>
</dbReference>
<dbReference type="PANTHER" id="PTHR21237:SF23">
    <property type="entry name" value="GRPE PROTEIN HOMOLOG, MITOCHONDRIAL"/>
    <property type="match status" value="1"/>
</dbReference>
<dbReference type="Pfam" id="PF01025">
    <property type="entry name" value="GrpE"/>
    <property type="match status" value="1"/>
</dbReference>
<dbReference type="PRINTS" id="PR00773">
    <property type="entry name" value="GRPEPROTEIN"/>
</dbReference>
<dbReference type="SUPFAM" id="SSF58014">
    <property type="entry name" value="Coiled-coil domain of nucleotide exchange factor GrpE"/>
    <property type="match status" value="1"/>
</dbReference>
<dbReference type="SUPFAM" id="SSF51064">
    <property type="entry name" value="Head domain of nucleotide exchange factor GrpE"/>
    <property type="match status" value="1"/>
</dbReference>
<dbReference type="PROSITE" id="PS01071">
    <property type="entry name" value="GRPE"/>
    <property type="match status" value="1"/>
</dbReference>
<proteinExistence type="inferred from homology"/>
<evidence type="ECO:0000255" key="1">
    <source>
        <dbReference type="HAMAP-Rule" id="MF_01151"/>
    </source>
</evidence>
<evidence type="ECO:0000256" key="2">
    <source>
        <dbReference type="SAM" id="MobiDB-lite"/>
    </source>
</evidence>
<protein>
    <recommendedName>
        <fullName evidence="1">Protein GrpE</fullName>
    </recommendedName>
    <alternativeName>
        <fullName evidence="1">HSP-70 cofactor</fullName>
    </alternativeName>
</protein>
<accession>Q6LUA8</accession>